<gene>
    <name type="primary">Hyal1</name>
</gene>
<protein>
    <recommendedName>
        <fullName>Hyaluronidase-1</fullName>
        <shortName>Hyal-1</shortName>
        <ecNumber>3.2.1.35</ecNumber>
    </recommendedName>
    <alternativeName>
        <fullName>Hyaluronoglucosaminidase-1</fullName>
    </alternativeName>
</protein>
<comment type="function">
    <text evidence="1 3">May have a role in promoting tumor progression. May block the TGFB1-enhanced cell growth (By similarity). Overexpression of HYAL1 suppressed the growth rate of colon carcinoma cell tumors in an experimental model.</text>
</comment>
<comment type="catalytic activity">
    <reaction>
        <text>Random hydrolysis of (1-&gt;4)-linkages between N-acetyl-beta-D-glucosamine and D-glucuronate residues in hyaluronate.</text>
        <dbReference type="EC" id="3.2.1.35"/>
    </reaction>
</comment>
<comment type="subcellular location">
    <subcellularLocation>
        <location evidence="1">Secreted</location>
    </subcellularLocation>
    <subcellularLocation>
        <location evidence="1">Lysosome</location>
    </subcellularLocation>
</comment>
<comment type="similarity">
    <text evidence="4">Belongs to the glycosyl hydrolase 56 family.</text>
</comment>
<keyword id="KW-1015">Disulfide bond</keyword>
<keyword id="KW-0245">EGF-like domain</keyword>
<keyword id="KW-0325">Glycoprotein</keyword>
<keyword id="KW-0326">Glycosidase</keyword>
<keyword id="KW-0378">Hydrolase</keyword>
<keyword id="KW-0458">Lysosome</keyword>
<keyword id="KW-1185">Reference proteome</keyword>
<keyword id="KW-0964">Secreted</keyword>
<keyword id="KW-0732">Signal</keyword>
<accession>Q76HN1</accession>
<sequence length="449" mass="50645">MKPFSPEVSPDPCPATAAHLLRTYTLFLTLLELAQGCRGSMVSNRPFITVWNADTHWCLKDHGVDVDVSVFDVVANKEQNFQGPNMTIFYREELGTYPYYTPTGEPVFGGLPQNASLVTHLAHAFQDIKAAMPEPDFSGLAVIDWEAWRPRWAFNWDSKDIYQQRSMELVRAEHPDWPETLVEAEAQGQFQEAAEAWMAGTLQLGQVLRPRGLWGYYGFPDCYNYDFLSPNYTGQCSLSIHDQNDQLGWLWNQSYALYPSIYLPAALMGTGKSQMYVRYRVQEAFRLALVSRDPHVPIMPYVQIFYEKTDYLLPLEELEHSLGESAAQGAAGAVLWISSEKTSTKESCQAIKAYMDSTLGPFILNVTSAALLCSEALCSGRGRCVRHPSYPEALLTLSPASFSIEPTHDGRPLSLKGTLSLKDRAQMAMKFKCRCYRGWSGEWCKKQDM</sequence>
<feature type="signal peptide" evidence="2">
    <location>
        <begin position="1"/>
        <end position="39"/>
    </location>
</feature>
<feature type="chain" id="PRO_0000042626" description="Hyaluronidase-1">
    <location>
        <begin position="40"/>
        <end position="449"/>
    </location>
</feature>
<feature type="domain" description="EGF-like">
    <location>
        <begin position="433"/>
        <end position="444"/>
    </location>
</feature>
<feature type="active site" description="Proton donor" evidence="1">
    <location>
        <position position="146"/>
    </location>
</feature>
<feature type="glycosylation site" description="N-linked (GlcNAc...) asparagine" evidence="2">
    <location>
        <position position="85"/>
    </location>
</feature>
<feature type="glycosylation site" description="N-linked (GlcNAc...) asparagine" evidence="2">
    <location>
        <position position="114"/>
    </location>
</feature>
<feature type="glycosylation site" description="N-linked (GlcNAc...) asparagine" evidence="2">
    <location>
        <position position="231"/>
    </location>
</feature>
<feature type="glycosylation site" description="N-linked (GlcNAc...) asparagine" evidence="2">
    <location>
        <position position="252"/>
    </location>
</feature>
<feature type="glycosylation site" description="N-linked (GlcNAc...) asparagine" evidence="2">
    <location>
        <position position="365"/>
    </location>
</feature>
<feature type="disulfide bond" evidence="1">
    <location>
        <begin position="58"/>
        <end position="348"/>
    </location>
</feature>
<feature type="disulfide bond" evidence="1">
    <location>
        <begin position="222"/>
        <end position="236"/>
    </location>
</feature>
<feature type="disulfide bond" evidence="1">
    <location>
        <begin position="373"/>
        <end position="384"/>
    </location>
</feature>
<feature type="disulfide bond" evidence="1">
    <location>
        <begin position="378"/>
        <end position="433"/>
    </location>
</feature>
<feature type="disulfide bond" evidence="1">
    <location>
        <begin position="435"/>
        <end position="444"/>
    </location>
</feature>
<proteinExistence type="evidence at transcript level"/>
<name>HYAL1_RAT</name>
<evidence type="ECO:0000250" key="1"/>
<evidence type="ECO:0000255" key="2"/>
<evidence type="ECO:0000269" key="3">
    <source>
    </source>
</evidence>
<evidence type="ECO:0000305" key="4"/>
<dbReference type="EC" id="3.2.1.35"/>
<dbReference type="EMBL" id="AB100600">
    <property type="protein sequence ID" value="BAD14368.1"/>
    <property type="molecule type" value="mRNA"/>
</dbReference>
<dbReference type="RefSeq" id="NP_997499.1">
    <property type="nucleotide sequence ID" value="NM_207616.1"/>
</dbReference>
<dbReference type="SMR" id="Q76HN1"/>
<dbReference type="FunCoup" id="Q76HN1">
    <property type="interactions" value="207"/>
</dbReference>
<dbReference type="STRING" id="10116.ENSRNOP00000021408"/>
<dbReference type="CAZy" id="GH56">
    <property type="family name" value="Glycoside Hydrolase Family 56"/>
</dbReference>
<dbReference type="GlyCosmos" id="Q76HN1">
    <property type="glycosylation" value="5 sites, No reported glycans"/>
</dbReference>
<dbReference type="GlyGen" id="Q76HN1">
    <property type="glycosylation" value="5 sites"/>
</dbReference>
<dbReference type="PhosphoSitePlus" id="Q76HN1"/>
<dbReference type="PaxDb" id="10116-ENSRNOP00000021408"/>
<dbReference type="GeneID" id="367166"/>
<dbReference type="KEGG" id="rno:367166"/>
<dbReference type="UCSC" id="RGD:1303060">
    <property type="organism name" value="rat"/>
</dbReference>
<dbReference type="AGR" id="RGD:1303060"/>
<dbReference type="CTD" id="3373"/>
<dbReference type="RGD" id="1303060">
    <property type="gene designation" value="Hyal1"/>
</dbReference>
<dbReference type="eggNOG" id="ENOG502QTUU">
    <property type="taxonomic scope" value="Eukaryota"/>
</dbReference>
<dbReference type="InParanoid" id="Q76HN1"/>
<dbReference type="PhylomeDB" id="Q76HN1"/>
<dbReference type="BRENDA" id="3.2.1.35">
    <property type="organism ID" value="5301"/>
</dbReference>
<dbReference type="Reactome" id="R-RNO-2024101">
    <property type="pathway name" value="CS/DS degradation"/>
</dbReference>
<dbReference type="Reactome" id="R-RNO-2160916">
    <property type="pathway name" value="Hyaluronan uptake and degradation"/>
</dbReference>
<dbReference type="PRO" id="PR:Q76HN1"/>
<dbReference type="Proteomes" id="UP000002494">
    <property type="component" value="Unplaced"/>
</dbReference>
<dbReference type="GO" id="GO:0031410">
    <property type="term" value="C:cytoplasmic vesicle"/>
    <property type="evidence" value="ECO:0000250"/>
    <property type="project" value="UniProtKB"/>
</dbReference>
<dbReference type="GO" id="GO:0005615">
    <property type="term" value="C:extracellular space"/>
    <property type="evidence" value="ECO:0000250"/>
    <property type="project" value="UniProtKB"/>
</dbReference>
<dbReference type="GO" id="GO:0036117">
    <property type="term" value="C:hyaluranon cable"/>
    <property type="evidence" value="ECO:0000250"/>
    <property type="project" value="UniProtKB"/>
</dbReference>
<dbReference type="GO" id="GO:0005764">
    <property type="term" value="C:lysosome"/>
    <property type="evidence" value="ECO:0000250"/>
    <property type="project" value="UniProtKB"/>
</dbReference>
<dbReference type="GO" id="GO:0052757">
    <property type="term" value="F:chondroitin hydrolase activity"/>
    <property type="evidence" value="ECO:0000266"/>
    <property type="project" value="RGD"/>
</dbReference>
<dbReference type="GO" id="GO:0004415">
    <property type="term" value="F:hyalurononglucosaminidase activity"/>
    <property type="evidence" value="ECO:0000266"/>
    <property type="project" value="RGD"/>
</dbReference>
<dbReference type="GO" id="GO:0005975">
    <property type="term" value="P:carbohydrate metabolic process"/>
    <property type="evidence" value="ECO:0007669"/>
    <property type="project" value="InterPro"/>
</dbReference>
<dbReference type="GO" id="GO:0051216">
    <property type="term" value="P:cartilage development"/>
    <property type="evidence" value="ECO:0000250"/>
    <property type="project" value="UniProtKB"/>
</dbReference>
<dbReference type="GO" id="GO:0044344">
    <property type="term" value="P:cellular response to fibroblast growth factor stimulus"/>
    <property type="evidence" value="ECO:0000266"/>
    <property type="project" value="RGD"/>
</dbReference>
<dbReference type="GO" id="GO:0071347">
    <property type="term" value="P:cellular response to interleukin-1"/>
    <property type="evidence" value="ECO:0000250"/>
    <property type="project" value="UniProtKB"/>
</dbReference>
<dbReference type="GO" id="GO:0071467">
    <property type="term" value="P:cellular response to pH"/>
    <property type="evidence" value="ECO:0000250"/>
    <property type="project" value="UniProtKB"/>
</dbReference>
<dbReference type="GO" id="GO:0036120">
    <property type="term" value="P:cellular response to platelet-derived growth factor stimulus"/>
    <property type="evidence" value="ECO:0000250"/>
    <property type="project" value="UniProtKB"/>
</dbReference>
<dbReference type="GO" id="GO:0071356">
    <property type="term" value="P:cellular response to tumor necrosis factor"/>
    <property type="evidence" value="ECO:0000266"/>
    <property type="project" value="RGD"/>
</dbReference>
<dbReference type="GO" id="GO:0071493">
    <property type="term" value="P:cellular response to UV-B"/>
    <property type="evidence" value="ECO:0000250"/>
    <property type="project" value="UniProtKB"/>
</dbReference>
<dbReference type="GO" id="GO:0030207">
    <property type="term" value="P:chondroitin sulfate proteoglycan catabolic process"/>
    <property type="evidence" value="ECO:0000266"/>
    <property type="project" value="RGD"/>
</dbReference>
<dbReference type="GO" id="GO:0060272">
    <property type="term" value="P:embryonic skeletal joint morphogenesis"/>
    <property type="evidence" value="ECO:0000266"/>
    <property type="project" value="RGD"/>
</dbReference>
<dbReference type="GO" id="GO:0030214">
    <property type="term" value="P:hyaluronan catabolic process"/>
    <property type="evidence" value="ECO:0000266"/>
    <property type="project" value="RGD"/>
</dbReference>
<dbReference type="GO" id="GO:0030212">
    <property type="term" value="P:hyaluronan metabolic process"/>
    <property type="evidence" value="ECO:0000250"/>
    <property type="project" value="UniProtKB"/>
</dbReference>
<dbReference type="GO" id="GO:0006954">
    <property type="term" value="P:inflammatory response"/>
    <property type="evidence" value="ECO:0000250"/>
    <property type="project" value="UniProtKB"/>
</dbReference>
<dbReference type="GO" id="GO:0030308">
    <property type="term" value="P:negative regulation of cell growth"/>
    <property type="evidence" value="ECO:0000250"/>
    <property type="project" value="UniProtKB"/>
</dbReference>
<dbReference type="GO" id="GO:0045766">
    <property type="term" value="P:positive regulation of angiogenesis"/>
    <property type="evidence" value="ECO:0000250"/>
    <property type="project" value="UniProtKB"/>
</dbReference>
<dbReference type="GO" id="GO:0045785">
    <property type="term" value="P:positive regulation of cell adhesion"/>
    <property type="evidence" value="ECO:0000250"/>
    <property type="project" value="UniProtKB"/>
</dbReference>
<dbReference type="GO" id="GO:0030307">
    <property type="term" value="P:positive regulation of cell growth"/>
    <property type="evidence" value="ECO:0000250"/>
    <property type="project" value="UniProtKB"/>
</dbReference>
<dbReference type="GO" id="GO:1900106">
    <property type="term" value="P:positive regulation of hyaluranon cable assembly"/>
    <property type="evidence" value="ECO:0000250"/>
    <property type="project" value="UniProtKB"/>
</dbReference>
<dbReference type="GO" id="GO:0046677">
    <property type="term" value="P:response to antibiotic"/>
    <property type="evidence" value="ECO:0000250"/>
    <property type="project" value="UniProtKB"/>
</dbReference>
<dbReference type="GO" id="GO:0000302">
    <property type="term" value="P:response to reactive oxygen species"/>
    <property type="evidence" value="ECO:0000250"/>
    <property type="project" value="UniProtKB"/>
</dbReference>
<dbReference type="GO" id="GO:0009615">
    <property type="term" value="P:response to virus"/>
    <property type="evidence" value="ECO:0000250"/>
    <property type="project" value="UniProtKB"/>
</dbReference>
<dbReference type="FunFam" id="3.20.20.70:FF:000065">
    <property type="entry name" value="Hyaluronidase"/>
    <property type="match status" value="1"/>
</dbReference>
<dbReference type="Gene3D" id="3.20.20.70">
    <property type="entry name" value="Aldolase class I"/>
    <property type="match status" value="1"/>
</dbReference>
<dbReference type="InterPro" id="IPR013785">
    <property type="entry name" value="Aldolase_TIM"/>
</dbReference>
<dbReference type="InterPro" id="IPR017853">
    <property type="entry name" value="Glycoside_hydrolase_SF"/>
</dbReference>
<dbReference type="InterPro" id="IPR018155">
    <property type="entry name" value="Hyaluronidase"/>
</dbReference>
<dbReference type="PANTHER" id="PTHR11769">
    <property type="entry name" value="HYALURONIDASE"/>
    <property type="match status" value="1"/>
</dbReference>
<dbReference type="PANTHER" id="PTHR11769:SF23">
    <property type="entry name" value="HYALURONIDASE-1"/>
    <property type="match status" value="1"/>
</dbReference>
<dbReference type="Pfam" id="PF01630">
    <property type="entry name" value="Glyco_hydro_56"/>
    <property type="match status" value="1"/>
</dbReference>
<dbReference type="PIRSF" id="PIRSF038193">
    <property type="entry name" value="Hyaluronidase"/>
    <property type="match status" value="1"/>
</dbReference>
<dbReference type="PRINTS" id="PR00846">
    <property type="entry name" value="GLHYDRLASE56"/>
</dbReference>
<dbReference type="SUPFAM" id="SSF51445">
    <property type="entry name" value="(Trans)glycosidases"/>
    <property type="match status" value="1"/>
</dbReference>
<dbReference type="PROSITE" id="PS00022">
    <property type="entry name" value="EGF_1"/>
    <property type="match status" value="1"/>
</dbReference>
<dbReference type="PROSITE" id="PS01186">
    <property type="entry name" value="EGF_2"/>
    <property type="match status" value="1"/>
</dbReference>
<organism>
    <name type="scientific">Rattus norvegicus</name>
    <name type="common">Rat</name>
    <dbReference type="NCBI Taxonomy" id="10116"/>
    <lineage>
        <taxon>Eukaryota</taxon>
        <taxon>Metazoa</taxon>
        <taxon>Chordata</taxon>
        <taxon>Craniata</taxon>
        <taxon>Vertebrata</taxon>
        <taxon>Euteleostomi</taxon>
        <taxon>Mammalia</taxon>
        <taxon>Eutheria</taxon>
        <taxon>Euarchontoglires</taxon>
        <taxon>Glires</taxon>
        <taxon>Rodentia</taxon>
        <taxon>Myomorpha</taxon>
        <taxon>Muroidea</taxon>
        <taxon>Muridae</taxon>
        <taxon>Murinae</taxon>
        <taxon>Rattus</taxon>
    </lineage>
</organism>
<reference key="1">
    <citation type="submission" date="2003-01" db="EMBL/GenBank/DDBJ databases">
        <title>Expression and activity of rat hyaluronidase.</title>
        <authorList>
            <person name="Hanaki A."/>
            <person name="Ueno Y."/>
            <person name="Nakasa T."/>
            <person name="Okinaka O."/>
        </authorList>
    </citation>
    <scope>NUCLEOTIDE SEQUENCE [MRNA]</scope>
    <source>
        <strain>Wistar</strain>
    </source>
</reference>
<reference key="2">
    <citation type="journal article" date="2002" name="Int. J. Cancer">
        <title>Expression of hyaluronan synthase 2 or hyaluronidase 1 differentially affect the growth rate of transplantable colon carcinoma cell tumors.</title>
        <authorList>
            <person name="Jacobson A."/>
            <person name="Rahmanian M."/>
            <person name="Rubin K."/>
            <person name="Heldin P."/>
        </authorList>
    </citation>
    <scope>FUNCTION</scope>
</reference>